<accession>Q83GX3</accession>
<proteinExistence type="inferred from homology"/>
<comment type="function">
    <text evidence="1">Binds as a heterodimer with protein bS6 to the central domain of the 16S rRNA, where it helps stabilize the platform of the 30S subunit.</text>
</comment>
<comment type="subunit">
    <text evidence="1">Part of the 30S ribosomal subunit. Forms a tight heterodimer with protein bS6.</text>
</comment>
<comment type="similarity">
    <text evidence="1">Belongs to the bacterial ribosomal protein bS18 family.</text>
</comment>
<reference key="1">
    <citation type="journal article" date="2003" name="Genome Res.">
        <title>Tropheryma whipplei twist: a human pathogenic Actinobacteria with a reduced genome.</title>
        <authorList>
            <person name="Raoult D."/>
            <person name="Ogata H."/>
            <person name="Audic S."/>
            <person name="Robert C."/>
            <person name="Suhre K."/>
            <person name="Drancourt M."/>
            <person name="Claverie J.-M."/>
        </authorList>
    </citation>
    <scope>NUCLEOTIDE SEQUENCE [LARGE SCALE GENOMIC DNA]</scope>
    <source>
        <strain>Twist</strain>
    </source>
</reference>
<evidence type="ECO:0000255" key="1">
    <source>
        <dbReference type="HAMAP-Rule" id="MF_00270"/>
    </source>
</evidence>
<evidence type="ECO:0000305" key="2"/>
<protein>
    <recommendedName>
        <fullName evidence="1">Small ribosomal subunit protein bS18</fullName>
    </recommendedName>
    <alternativeName>
        <fullName evidence="2">30S ribosomal protein S18</fullName>
    </alternativeName>
</protein>
<organism>
    <name type="scientific">Tropheryma whipplei (strain Twist)</name>
    <name type="common">Whipple's bacillus</name>
    <dbReference type="NCBI Taxonomy" id="203267"/>
    <lineage>
        <taxon>Bacteria</taxon>
        <taxon>Bacillati</taxon>
        <taxon>Actinomycetota</taxon>
        <taxon>Actinomycetes</taxon>
        <taxon>Micrococcales</taxon>
        <taxon>Tropherymataceae</taxon>
        <taxon>Tropheryma</taxon>
    </lineage>
</organism>
<gene>
    <name evidence="1" type="primary">rpsR</name>
    <name type="ordered locus">TWT_106</name>
</gene>
<feature type="chain" id="PRO_0000111256" description="Small ribosomal subunit protein bS18">
    <location>
        <begin position="1"/>
        <end position="83"/>
    </location>
</feature>
<dbReference type="EMBL" id="AE014184">
    <property type="protein sequence ID" value="AAO44203.1"/>
    <property type="molecule type" value="Genomic_DNA"/>
</dbReference>
<dbReference type="SMR" id="Q83GX3"/>
<dbReference type="STRING" id="203267.TWT_106"/>
<dbReference type="KEGG" id="twh:TWT_106"/>
<dbReference type="eggNOG" id="COG0238">
    <property type="taxonomic scope" value="Bacteria"/>
</dbReference>
<dbReference type="HOGENOM" id="CLU_148710_1_0_11"/>
<dbReference type="OrthoDB" id="9812008at2"/>
<dbReference type="Proteomes" id="UP000002200">
    <property type="component" value="Chromosome"/>
</dbReference>
<dbReference type="GO" id="GO:0022627">
    <property type="term" value="C:cytosolic small ribosomal subunit"/>
    <property type="evidence" value="ECO:0007669"/>
    <property type="project" value="TreeGrafter"/>
</dbReference>
<dbReference type="GO" id="GO:0070181">
    <property type="term" value="F:small ribosomal subunit rRNA binding"/>
    <property type="evidence" value="ECO:0007669"/>
    <property type="project" value="TreeGrafter"/>
</dbReference>
<dbReference type="GO" id="GO:0003735">
    <property type="term" value="F:structural constituent of ribosome"/>
    <property type="evidence" value="ECO:0007669"/>
    <property type="project" value="InterPro"/>
</dbReference>
<dbReference type="GO" id="GO:0006412">
    <property type="term" value="P:translation"/>
    <property type="evidence" value="ECO:0007669"/>
    <property type="project" value="UniProtKB-UniRule"/>
</dbReference>
<dbReference type="Gene3D" id="4.10.640.10">
    <property type="entry name" value="Ribosomal protein S18"/>
    <property type="match status" value="1"/>
</dbReference>
<dbReference type="HAMAP" id="MF_00270">
    <property type="entry name" value="Ribosomal_bS18"/>
    <property type="match status" value="1"/>
</dbReference>
<dbReference type="InterPro" id="IPR001648">
    <property type="entry name" value="Ribosomal_bS18"/>
</dbReference>
<dbReference type="InterPro" id="IPR018275">
    <property type="entry name" value="Ribosomal_bS18_CS"/>
</dbReference>
<dbReference type="InterPro" id="IPR036870">
    <property type="entry name" value="Ribosomal_bS18_sf"/>
</dbReference>
<dbReference type="NCBIfam" id="TIGR00165">
    <property type="entry name" value="S18"/>
    <property type="match status" value="1"/>
</dbReference>
<dbReference type="PANTHER" id="PTHR13479">
    <property type="entry name" value="30S RIBOSOMAL PROTEIN S18"/>
    <property type="match status" value="1"/>
</dbReference>
<dbReference type="PANTHER" id="PTHR13479:SF40">
    <property type="entry name" value="SMALL RIBOSOMAL SUBUNIT PROTEIN BS18M"/>
    <property type="match status" value="1"/>
</dbReference>
<dbReference type="Pfam" id="PF01084">
    <property type="entry name" value="Ribosomal_S18"/>
    <property type="match status" value="1"/>
</dbReference>
<dbReference type="PRINTS" id="PR00974">
    <property type="entry name" value="RIBOSOMALS18"/>
</dbReference>
<dbReference type="SUPFAM" id="SSF46911">
    <property type="entry name" value="Ribosomal protein S18"/>
    <property type="match status" value="1"/>
</dbReference>
<dbReference type="PROSITE" id="PS00057">
    <property type="entry name" value="RIBOSOMAL_S18"/>
    <property type="match status" value="1"/>
</dbReference>
<keyword id="KW-1185">Reference proteome</keyword>
<keyword id="KW-0687">Ribonucleoprotein</keyword>
<keyword id="KW-0689">Ribosomal protein</keyword>
<keyword id="KW-0694">RNA-binding</keyword>
<keyword id="KW-0699">rRNA-binding</keyword>
<name>RS18_TROWT</name>
<sequence length="83" mass="9266">MGYRAKGRRQPKADSVVAPPKRVSIKGLDYKDLASLKRFLSDRGKIRARRVTGASIQQQRQIAKAIKNAREMGVIPFKSGVSR</sequence>